<keyword id="KW-1185">Reference proteome</keyword>
<keyword id="KW-0687">Ribonucleoprotein</keyword>
<keyword id="KW-0689">Ribosomal protein</keyword>
<comment type="similarity">
    <text evidence="1">Belongs to the bacterial ribosomal protein bL34 family.</text>
</comment>
<dbReference type="EMBL" id="AE017126">
    <property type="protein sequence ID" value="AAQ00343.1"/>
    <property type="molecule type" value="Genomic_DNA"/>
</dbReference>
<dbReference type="RefSeq" id="NP_875690.1">
    <property type="nucleotide sequence ID" value="NC_005042.1"/>
</dbReference>
<dbReference type="RefSeq" id="WP_011125450.1">
    <property type="nucleotide sequence ID" value="NC_005042.1"/>
</dbReference>
<dbReference type="SMR" id="Q7VB02"/>
<dbReference type="STRING" id="167539.Pro_1299"/>
<dbReference type="EnsemblBacteria" id="AAQ00343">
    <property type="protein sequence ID" value="AAQ00343"/>
    <property type="gene ID" value="Pro_1299"/>
</dbReference>
<dbReference type="KEGG" id="pma:Pro_1299"/>
<dbReference type="PATRIC" id="fig|167539.5.peg.1364"/>
<dbReference type="eggNOG" id="COG0230">
    <property type="taxonomic scope" value="Bacteria"/>
</dbReference>
<dbReference type="HOGENOM" id="CLU_129938_2_1_3"/>
<dbReference type="Proteomes" id="UP000001420">
    <property type="component" value="Chromosome"/>
</dbReference>
<dbReference type="GO" id="GO:1990904">
    <property type="term" value="C:ribonucleoprotein complex"/>
    <property type="evidence" value="ECO:0007669"/>
    <property type="project" value="UniProtKB-KW"/>
</dbReference>
<dbReference type="GO" id="GO:0005840">
    <property type="term" value="C:ribosome"/>
    <property type="evidence" value="ECO:0007669"/>
    <property type="project" value="UniProtKB-KW"/>
</dbReference>
<dbReference type="GO" id="GO:0003735">
    <property type="term" value="F:structural constituent of ribosome"/>
    <property type="evidence" value="ECO:0007669"/>
    <property type="project" value="InterPro"/>
</dbReference>
<dbReference type="GO" id="GO:0006412">
    <property type="term" value="P:translation"/>
    <property type="evidence" value="ECO:0007669"/>
    <property type="project" value="UniProtKB-UniRule"/>
</dbReference>
<dbReference type="Gene3D" id="1.10.287.3980">
    <property type="match status" value="1"/>
</dbReference>
<dbReference type="HAMAP" id="MF_00391">
    <property type="entry name" value="Ribosomal_bL34"/>
    <property type="match status" value="1"/>
</dbReference>
<dbReference type="InterPro" id="IPR000271">
    <property type="entry name" value="Ribosomal_bL34"/>
</dbReference>
<dbReference type="InterPro" id="IPR020939">
    <property type="entry name" value="Ribosomal_bL34_CS"/>
</dbReference>
<dbReference type="NCBIfam" id="TIGR01030">
    <property type="entry name" value="rpmH_bact"/>
    <property type="match status" value="1"/>
</dbReference>
<dbReference type="Pfam" id="PF00468">
    <property type="entry name" value="Ribosomal_L34"/>
    <property type="match status" value="1"/>
</dbReference>
<dbReference type="PROSITE" id="PS00784">
    <property type="entry name" value="RIBOSOMAL_L34"/>
    <property type="match status" value="1"/>
</dbReference>
<evidence type="ECO:0000255" key="1">
    <source>
        <dbReference type="HAMAP-Rule" id="MF_00391"/>
    </source>
</evidence>
<evidence type="ECO:0000256" key="2">
    <source>
        <dbReference type="SAM" id="MobiDB-lite"/>
    </source>
</evidence>
<evidence type="ECO:0000305" key="3"/>
<reference key="1">
    <citation type="journal article" date="2003" name="Proc. Natl. Acad. Sci. U.S.A.">
        <title>Genome sequence of the cyanobacterium Prochlorococcus marinus SS120, a nearly minimal oxyphototrophic genome.</title>
        <authorList>
            <person name="Dufresne A."/>
            <person name="Salanoubat M."/>
            <person name="Partensky F."/>
            <person name="Artiguenave F."/>
            <person name="Axmann I.M."/>
            <person name="Barbe V."/>
            <person name="Duprat S."/>
            <person name="Galperin M.Y."/>
            <person name="Koonin E.V."/>
            <person name="Le Gall F."/>
            <person name="Makarova K.S."/>
            <person name="Ostrowski M."/>
            <person name="Oztas S."/>
            <person name="Robert C."/>
            <person name="Rogozin I.B."/>
            <person name="Scanlan D.J."/>
            <person name="Tandeau de Marsac N."/>
            <person name="Weissenbach J."/>
            <person name="Wincker P."/>
            <person name="Wolf Y.I."/>
            <person name="Hess W.R."/>
        </authorList>
    </citation>
    <scope>NUCLEOTIDE SEQUENCE [LARGE SCALE GENOMIC DNA]</scope>
    <source>
        <strain>SARG / CCMP1375 / SS120</strain>
    </source>
</reference>
<sequence length="45" mass="5303">MTKRTFGGTSRKRKRVSGFRVRMRTHTGRSVIRSRRKKGRSRIAV</sequence>
<feature type="chain" id="PRO_0000187437" description="Large ribosomal subunit protein bL34">
    <location>
        <begin position="1"/>
        <end position="45"/>
    </location>
</feature>
<feature type="region of interest" description="Disordered" evidence="2">
    <location>
        <begin position="1"/>
        <end position="45"/>
    </location>
</feature>
<feature type="compositionally biased region" description="Basic residues" evidence="2">
    <location>
        <begin position="10"/>
        <end position="45"/>
    </location>
</feature>
<protein>
    <recommendedName>
        <fullName evidence="1">Large ribosomal subunit protein bL34</fullName>
    </recommendedName>
    <alternativeName>
        <fullName evidence="3">50S ribosomal protein L34</fullName>
    </alternativeName>
</protein>
<proteinExistence type="inferred from homology"/>
<gene>
    <name evidence="1" type="primary">rpmH</name>
    <name evidence="1" type="synonym">rpl34</name>
    <name type="ordered locus">Pro_1299</name>
</gene>
<accession>Q7VB02</accession>
<name>RL34_PROMA</name>
<organism>
    <name type="scientific">Prochlorococcus marinus (strain SARG / CCMP1375 / SS120)</name>
    <dbReference type="NCBI Taxonomy" id="167539"/>
    <lineage>
        <taxon>Bacteria</taxon>
        <taxon>Bacillati</taxon>
        <taxon>Cyanobacteriota</taxon>
        <taxon>Cyanophyceae</taxon>
        <taxon>Synechococcales</taxon>
        <taxon>Prochlorococcaceae</taxon>
        <taxon>Prochlorococcus</taxon>
    </lineage>
</organism>